<gene>
    <name evidence="1" type="primary">hisF</name>
    <name type="ordered locus">AZOSEA06930</name>
    <name type="ORF">ebA1291</name>
</gene>
<name>HIS6_AROAE</name>
<sequence length="252" mass="26647">MLAKRIIPCLDVNAGRVVKGVNFVELRDAGDPVEIARRYDEQGADEITFLDITASSDARDIILHVVEQVAEQVFIPLTVGGGVRTVEDVRRLLNAGADKVSINTAAVNNPQVVAEAAGKVGSQCIVVAIDAKQTAPGRWQVFTHGGRNNTGLDAVEWAQKVAALGAGEILLTSMDRDGTKIGFDLGLTRAVADAVPIPVIASGGVGTLEHLAEGVSEGRADAVLAASIFHFGQHTVREAKELMRSRGIEVRL</sequence>
<protein>
    <recommendedName>
        <fullName evidence="1">Imidazole glycerol phosphate synthase subunit HisF</fullName>
        <ecNumber evidence="1">4.3.2.10</ecNumber>
    </recommendedName>
    <alternativeName>
        <fullName evidence="1">IGP synthase cyclase subunit</fullName>
    </alternativeName>
    <alternativeName>
        <fullName evidence="1">IGP synthase subunit HisF</fullName>
    </alternativeName>
    <alternativeName>
        <fullName evidence="1">ImGP synthase subunit HisF</fullName>
        <shortName evidence="1">IGPS subunit HisF</shortName>
    </alternativeName>
</protein>
<proteinExistence type="inferred from homology"/>
<accession>Q5P795</accession>
<keyword id="KW-0028">Amino-acid biosynthesis</keyword>
<keyword id="KW-0963">Cytoplasm</keyword>
<keyword id="KW-0368">Histidine biosynthesis</keyword>
<keyword id="KW-0456">Lyase</keyword>
<keyword id="KW-1185">Reference proteome</keyword>
<evidence type="ECO:0000255" key="1">
    <source>
        <dbReference type="HAMAP-Rule" id="MF_01013"/>
    </source>
</evidence>
<organism>
    <name type="scientific">Aromatoleum aromaticum (strain DSM 19018 / LMG 30748 / EbN1)</name>
    <name type="common">Azoarcus sp. (strain EbN1)</name>
    <dbReference type="NCBI Taxonomy" id="76114"/>
    <lineage>
        <taxon>Bacteria</taxon>
        <taxon>Pseudomonadati</taxon>
        <taxon>Pseudomonadota</taxon>
        <taxon>Betaproteobacteria</taxon>
        <taxon>Rhodocyclales</taxon>
        <taxon>Rhodocyclaceae</taxon>
        <taxon>Aromatoleum</taxon>
    </lineage>
</organism>
<dbReference type="EC" id="4.3.2.10" evidence="1"/>
<dbReference type="EMBL" id="CR555306">
    <property type="protein sequence ID" value="CAI06816.1"/>
    <property type="molecule type" value="Genomic_DNA"/>
</dbReference>
<dbReference type="RefSeq" id="WP_011236544.1">
    <property type="nucleotide sequence ID" value="NC_006513.1"/>
</dbReference>
<dbReference type="SMR" id="Q5P795"/>
<dbReference type="STRING" id="76114.ebA1291"/>
<dbReference type="KEGG" id="eba:ebA1291"/>
<dbReference type="eggNOG" id="COG0107">
    <property type="taxonomic scope" value="Bacteria"/>
</dbReference>
<dbReference type="HOGENOM" id="CLU_048577_4_0_4"/>
<dbReference type="OrthoDB" id="9781903at2"/>
<dbReference type="UniPathway" id="UPA00031">
    <property type="reaction ID" value="UER00010"/>
</dbReference>
<dbReference type="Proteomes" id="UP000006552">
    <property type="component" value="Chromosome"/>
</dbReference>
<dbReference type="GO" id="GO:0005737">
    <property type="term" value="C:cytoplasm"/>
    <property type="evidence" value="ECO:0007669"/>
    <property type="project" value="UniProtKB-SubCell"/>
</dbReference>
<dbReference type="GO" id="GO:0000107">
    <property type="term" value="F:imidazoleglycerol-phosphate synthase activity"/>
    <property type="evidence" value="ECO:0007669"/>
    <property type="project" value="UniProtKB-UniRule"/>
</dbReference>
<dbReference type="GO" id="GO:0016829">
    <property type="term" value="F:lyase activity"/>
    <property type="evidence" value="ECO:0007669"/>
    <property type="project" value="UniProtKB-KW"/>
</dbReference>
<dbReference type="GO" id="GO:0000105">
    <property type="term" value="P:L-histidine biosynthetic process"/>
    <property type="evidence" value="ECO:0007669"/>
    <property type="project" value="UniProtKB-UniRule"/>
</dbReference>
<dbReference type="CDD" id="cd04731">
    <property type="entry name" value="HisF"/>
    <property type="match status" value="1"/>
</dbReference>
<dbReference type="FunFam" id="3.20.20.70:FF:000006">
    <property type="entry name" value="Imidazole glycerol phosphate synthase subunit HisF"/>
    <property type="match status" value="1"/>
</dbReference>
<dbReference type="Gene3D" id="3.20.20.70">
    <property type="entry name" value="Aldolase class I"/>
    <property type="match status" value="1"/>
</dbReference>
<dbReference type="HAMAP" id="MF_01013">
    <property type="entry name" value="HisF"/>
    <property type="match status" value="1"/>
</dbReference>
<dbReference type="InterPro" id="IPR013785">
    <property type="entry name" value="Aldolase_TIM"/>
</dbReference>
<dbReference type="InterPro" id="IPR006062">
    <property type="entry name" value="His_biosynth"/>
</dbReference>
<dbReference type="InterPro" id="IPR004651">
    <property type="entry name" value="HisF"/>
</dbReference>
<dbReference type="InterPro" id="IPR050064">
    <property type="entry name" value="IGPS_HisA/HisF"/>
</dbReference>
<dbReference type="InterPro" id="IPR011060">
    <property type="entry name" value="RibuloseP-bd_barrel"/>
</dbReference>
<dbReference type="NCBIfam" id="TIGR00735">
    <property type="entry name" value="hisF"/>
    <property type="match status" value="1"/>
</dbReference>
<dbReference type="PANTHER" id="PTHR21235:SF2">
    <property type="entry name" value="IMIDAZOLE GLYCEROL PHOSPHATE SYNTHASE HISHF"/>
    <property type="match status" value="1"/>
</dbReference>
<dbReference type="PANTHER" id="PTHR21235">
    <property type="entry name" value="IMIDAZOLE GLYCEROL PHOSPHATE SYNTHASE SUBUNIT HISF/H IGP SYNTHASE SUBUNIT HISF/H"/>
    <property type="match status" value="1"/>
</dbReference>
<dbReference type="Pfam" id="PF00977">
    <property type="entry name" value="His_biosynth"/>
    <property type="match status" value="1"/>
</dbReference>
<dbReference type="SUPFAM" id="SSF51366">
    <property type="entry name" value="Ribulose-phoshate binding barrel"/>
    <property type="match status" value="1"/>
</dbReference>
<reference key="1">
    <citation type="journal article" date="2005" name="Arch. Microbiol.">
        <title>The genome sequence of an anaerobic aromatic-degrading denitrifying bacterium, strain EbN1.</title>
        <authorList>
            <person name="Rabus R."/>
            <person name="Kube M."/>
            <person name="Heider J."/>
            <person name="Beck A."/>
            <person name="Heitmann K."/>
            <person name="Widdel F."/>
            <person name="Reinhardt R."/>
        </authorList>
    </citation>
    <scope>NUCLEOTIDE SEQUENCE [LARGE SCALE GENOMIC DNA]</scope>
    <source>
        <strain>DSM 19018 / LMG 30748 / EbN1</strain>
    </source>
</reference>
<feature type="chain" id="PRO_0000142109" description="Imidazole glycerol phosphate synthase subunit HisF">
    <location>
        <begin position="1"/>
        <end position="252"/>
    </location>
</feature>
<feature type="active site" evidence="1">
    <location>
        <position position="11"/>
    </location>
</feature>
<feature type="active site" evidence="1">
    <location>
        <position position="130"/>
    </location>
</feature>
<comment type="function">
    <text evidence="1">IGPS catalyzes the conversion of PRFAR and glutamine to IGP, AICAR and glutamate. The HisF subunit catalyzes the cyclization activity that produces IGP and AICAR from PRFAR using the ammonia provided by the HisH subunit.</text>
</comment>
<comment type="catalytic activity">
    <reaction evidence="1">
        <text>5-[(5-phospho-1-deoxy-D-ribulos-1-ylimino)methylamino]-1-(5-phospho-beta-D-ribosyl)imidazole-4-carboxamide + L-glutamine = D-erythro-1-(imidazol-4-yl)glycerol 3-phosphate + 5-amino-1-(5-phospho-beta-D-ribosyl)imidazole-4-carboxamide + L-glutamate + H(+)</text>
        <dbReference type="Rhea" id="RHEA:24793"/>
        <dbReference type="ChEBI" id="CHEBI:15378"/>
        <dbReference type="ChEBI" id="CHEBI:29985"/>
        <dbReference type="ChEBI" id="CHEBI:58278"/>
        <dbReference type="ChEBI" id="CHEBI:58359"/>
        <dbReference type="ChEBI" id="CHEBI:58475"/>
        <dbReference type="ChEBI" id="CHEBI:58525"/>
        <dbReference type="EC" id="4.3.2.10"/>
    </reaction>
</comment>
<comment type="pathway">
    <text evidence="1">Amino-acid biosynthesis; L-histidine biosynthesis; L-histidine from 5-phospho-alpha-D-ribose 1-diphosphate: step 5/9.</text>
</comment>
<comment type="subunit">
    <text evidence="1">Heterodimer of HisH and HisF.</text>
</comment>
<comment type="subcellular location">
    <subcellularLocation>
        <location evidence="1">Cytoplasm</location>
    </subcellularLocation>
</comment>
<comment type="similarity">
    <text evidence="1">Belongs to the HisA/HisF family.</text>
</comment>